<comment type="function">
    <text evidence="1">Binds 23S rRNA and is also seen to make contacts with the A and possibly P site tRNAs.</text>
</comment>
<comment type="subunit">
    <text evidence="1">Part of the 50S ribosomal subunit.</text>
</comment>
<comment type="similarity">
    <text evidence="1">Belongs to the universal ribosomal protein uL16 family.</text>
</comment>
<keyword id="KW-0687">Ribonucleoprotein</keyword>
<keyword id="KW-0689">Ribosomal protein</keyword>
<keyword id="KW-0694">RNA-binding</keyword>
<keyword id="KW-0699">rRNA-binding</keyword>
<keyword id="KW-0820">tRNA-binding</keyword>
<protein>
    <recommendedName>
        <fullName evidence="1">Large ribosomal subunit protein uL16</fullName>
    </recommendedName>
    <alternativeName>
        <fullName evidence="3">50S ribosomal protein L16</fullName>
    </alternativeName>
</protein>
<dbReference type="EMBL" id="CP000656">
    <property type="protein sequence ID" value="ABP47508.1"/>
    <property type="molecule type" value="Genomic_DNA"/>
</dbReference>
<dbReference type="SMR" id="A4TEB7"/>
<dbReference type="STRING" id="350054.Mflv_5042"/>
<dbReference type="KEGG" id="mgi:Mflv_5042"/>
<dbReference type="eggNOG" id="COG0197">
    <property type="taxonomic scope" value="Bacteria"/>
</dbReference>
<dbReference type="HOGENOM" id="CLU_078858_2_1_11"/>
<dbReference type="OrthoDB" id="9802589at2"/>
<dbReference type="GO" id="GO:0022625">
    <property type="term" value="C:cytosolic large ribosomal subunit"/>
    <property type="evidence" value="ECO:0007669"/>
    <property type="project" value="TreeGrafter"/>
</dbReference>
<dbReference type="GO" id="GO:0019843">
    <property type="term" value="F:rRNA binding"/>
    <property type="evidence" value="ECO:0007669"/>
    <property type="project" value="UniProtKB-UniRule"/>
</dbReference>
<dbReference type="GO" id="GO:0003735">
    <property type="term" value="F:structural constituent of ribosome"/>
    <property type="evidence" value="ECO:0007669"/>
    <property type="project" value="InterPro"/>
</dbReference>
<dbReference type="GO" id="GO:0000049">
    <property type="term" value="F:tRNA binding"/>
    <property type="evidence" value="ECO:0007669"/>
    <property type="project" value="UniProtKB-KW"/>
</dbReference>
<dbReference type="GO" id="GO:0006412">
    <property type="term" value="P:translation"/>
    <property type="evidence" value="ECO:0007669"/>
    <property type="project" value="UniProtKB-UniRule"/>
</dbReference>
<dbReference type="CDD" id="cd01433">
    <property type="entry name" value="Ribosomal_L16_L10e"/>
    <property type="match status" value="1"/>
</dbReference>
<dbReference type="FunFam" id="3.90.1170.10:FF:000001">
    <property type="entry name" value="50S ribosomal protein L16"/>
    <property type="match status" value="1"/>
</dbReference>
<dbReference type="Gene3D" id="3.90.1170.10">
    <property type="entry name" value="Ribosomal protein L10e/L16"/>
    <property type="match status" value="1"/>
</dbReference>
<dbReference type="HAMAP" id="MF_01342">
    <property type="entry name" value="Ribosomal_uL16"/>
    <property type="match status" value="1"/>
</dbReference>
<dbReference type="InterPro" id="IPR047873">
    <property type="entry name" value="Ribosomal_uL16"/>
</dbReference>
<dbReference type="InterPro" id="IPR000114">
    <property type="entry name" value="Ribosomal_uL16_bact-type"/>
</dbReference>
<dbReference type="InterPro" id="IPR020798">
    <property type="entry name" value="Ribosomal_uL16_CS"/>
</dbReference>
<dbReference type="InterPro" id="IPR016180">
    <property type="entry name" value="Ribosomal_uL16_dom"/>
</dbReference>
<dbReference type="InterPro" id="IPR036920">
    <property type="entry name" value="Ribosomal_uL16_sf"/>
</dbReference>
<dbReference type="NCBIfam" id="TIGR01164">
    <property type="entry name" value="rplP_bact"/>
    <property type="match status" value="1"/>
</dbReference>
<dbReference type="PANTHER" id="PTHR12220">
    <property type="entry name" value="50S/60S RIBOSOMAL PROTEIN L16"/>
    <property type="match status" value="1"/>
</dbReference>
<dbReference type="PANTHER" id="PTHR12220:SF13">
    <property type="entry name" value="LARGE RIBOSOMAL SUBUNIT PROTEIN UL16M"/>
    <property type="match status" value="1"/>
</dbReference>
<dbReference type="Pfam" id="PF00252">
    <property type="entry name" value="Ribosomal_L16"/>
    <property type="match status" value="1"/>
</dbReference>
<dbReference type="PRINTS" id="PR00060">
    <property type="entry name" value="RIBOSOMALL16"/>
</dbReference>
<dbReference type="SUPFAM" id="SSF54686">
    <property type="entry name" value="Ribosomal protein L16p/L10e"/>
    <property type="match status" value="1"/>
</dbReference>
<dbReference type="PROSITE" id="PS00586">
    <property type="entry name" value="RIBOSOMAL_L16_1"/>
    <property type="match status" value="1"/>
</dbReference>
<dbReference type="PROSITE" id="PS00701">
    <property type="entry name" value="RIBOSOMAL_L16_2"/>
    <property type="match status" value="1"/>
</dbReference>
<organism>
    <name type="scientific">Mycolicibacterium gilvum (strain PYR-GCK)</name>
    <name type="common">Mycobacterium gilvum (strain PYR-GCK)</name>
    <dbReference type="NCBI Taxonomy" id="350054"/>
    <lineage>
        <taxon>Bacteria</taxon>
        <taxon>Bacillati</taxon>
        <taxon>Actinomycetota</taxon>
        <taxon>Actinomycetes</taxon>
        <taxon>Mycobacteriales</taxon>
        <taxon>Mycobacteriaceae</taxon>
        <taxon>Mycolicibacterium</taxon>
    </lineage>
</organism>
<reference key="1">
    <citation type="submission" date="2007-04" db="EMBL/GenBank/DDBJ databases">
        <title>Complete sequence of chromosome of Mycobacterium gilvum PYR-GCK.</title>
        <authorList>
            <consortium name="US DOE Joint Genome Institute"/>
            <person name="Copeland A."/>
            <person name="Lucas S."/>
            <person name="Lapidus A."/>
            <person name="Barry K."/>
            <person name="Detter J.C."/>
            <person name="Glavina del Rio T."/>
            <person name="Hammon N."/>
            <person name="Israni S."/>
            <person name="Dalin E."/>
            <person name="Tice H."/>
            <person name="Pitluck S."/>
            <person name="Chain P."/>
            <person name="Malfatti S."/>
            <person name="Shin M."/>
            <person name="Vergez L."/>
            <person name="Schmutz J."/>
            <person name="Larimer F."/>
            <person name="Land M."/>
            <person name="Hauser L."/>
            <person name="Kyrpides N."/>
            <person name="Mikhailova N."/>
            <person name="Miller C."/>
            <person name="Richardson P."/>
        </authorList>
    </citation>
    <scope>NUCLEOTIDE SEQUENCE [LARGE SCALE GENOMIC DNA]</scope>
    <source>
        <strain>PYR-GCK</strain>
    </source>
</reference>
<name>RL16_MYCGI</name>
<sequence>MLIPRKVKHRKQHHPRQRGIASGGTSVSFGDYGIQAMGHAYITNRQIESARIAINRHIKRGGKVWINIFPDRPLTKKPAETRMGSGKGSPEWWVANVKPGRVLFELSYPDEKIAREALTRAIHKLPIKARIVTREEQF</sequence>
<evidence type="ECO:0000255" key="1">
    <source>
        <dbReference type="HAMAP-Rule" id="MF_01342"/>
    </source>
</evidence>
<evidence type="ECO:0000256" key="2">
    <source>
        <dbReference type="SAM" id="MobiDB-lite"/>
    </source>
</evidence>
<evidence type="ECO:0000305" key="3"/>
<feature type="chain" id="PRO_1000086764" description="Large ribosomal subunit protein uL16">
    <location>
        <begin position="1"/>
        <end position="138"/>
    </location>
</feature>
<feature type="region of interest" description="Disordered" evidence="2">
    <location>
        <begin position="1"/>
        <end position="24"/>
    </location>
</feature>
<feature type="compositionally biased region" description="Basic residues" evidence="2">
    <location>
        <begin position="1"/>
        <end position="17"/>
    </location>
</feature>
<gene>
    <name evidence="1" type="primary">rplP</name>
    <name type="ordered locus">Mflv_5042</name>
</gene>
<proteinExistence type="inferred from homology"/>
<accession>A4TEB7</accession>